<feature type="chain" id="PRO_1000046483" description="Phosphoribosylformylglycinamidine cyclo-ligase">
    <location>
        <begin position="1"/>
        <end position="347"/>
    </location>
</feature>
<dbReference type="EC" id="6.3.3.1" evidence="1"/>
<dbReference type="EMBL" id="AM286415">
    <property type="protein sequence ID" value="CAL11222.1"/>
    <property type="molecule type" value="Genomic_DNA"/>
</dbReference>
<dbReference type="RefSeq" id="WP_005172388.1">
    <property type="nucleotide sequence ID" value="NC_008800.1"/>
</dbReference>
<dbReference type="RefSeq" id="YP_001005455.1">
    <property type="nucleotide sequence ID" value="NC_008800.1"/>
</dbReference>
<dbReference type="SMR" id="A1JKZ7"/>
<dbReference type="KEGG" id="yen:YE1127"/>
<dbReference type="PATRIC" id="fig|393305.7.peg.1228"/>
<dbReference type="eggNOG" id="COG0150">
    <property type="taxonomic scope" value="Bacteria"/>
</dbReference>
<dbReference type="HOGENOM" id="CLU_047116_0_0_6"/>
<dbReference type="OrthoDB" id="9777881at2"/>
<dbReference type="UniPathway" id="UPA00074">
    <property type="reaction ID" value="UER00129"/>
</dbReference>
<dbReference type="Proteomes" id="UP000000642">
    <property type="component" value="Chromosome"/>
</dbReference>
<dbReference type="GO" id="GO:0005829">
    <property type="term" value="C:cytosol"/>
    <property type="evidence" value="ECO:0007669"/>
    <property type="project" value="TreeGrafter"/>
</dbReference>
<dbReference type="GO" id="GO:0005524">
    <property type="term" value="F:ATP binding"/>
    <property type="evidence" value="ECO:0007669"/>
    <property type="project" value="UniProtKB-KW"/>
</dbReference>
<dbReference type="GO" id="GO:0004637">
    <property type="term" value="F:phosphoribosylamine-glycine ligase activity"/>
    <property type="evidence" value="ECO:0007669"/>
    <property type="project" value="TreeGrafter"/>
</dbReference>
<dbReference type="GO" id="GO:0004641">
    <property type="term" value="F:phosphoribosylformylglycinamidine cyclo-ligase activity"/>
    <property type="evidence" value="ECO:0007669"/>
    <property type="project" value="UniProtKB-UniRule"/>
</dbReference>
<dbReference type="GO" id="GO:0006189">
    <property type="term" value="P:'de novo' IMP biosynthetic process"/>
    <property type="evidence" value="ECO:0007669"/>
    <property type="project" value="UniProtKB-UniRule"/>
</dbReference>
<dbReference type="GO" id="GO:0046084">
    <property type="term" value="P:adenine biosynthetic process"/>
    <property type="evidence" value="ECO:0007669"/>
    <property type="project" value="TreeGrafter"/>
</dbReference>
<dbReference type="CDD" id="cd02196">
    <property type="entry name" value="PurM"/>
    <property type="match status" value="1"/>
</dbReference>
<dbReference type="FunFam" id="3.30.1330.10:FF:000001">
    <property type="entry name" value="Phosphoribosylformylglycinamidine cyclo-ligase"/>
    <property type="match status" value="1"/>
</dbReference>
<dbReference type="FunFam" id="3.90.650.10:FF:000001">
    <property type="entry name" value="Phosphoribosylformylglycinamidine cyclo-ligase"/>
    <property type="match status" value="1"/>
</dbReference>
<dbReference type="Gene3D" id="3.90.650.10">
    <property type="entry name" value="PurM-like C-terminal domain"/>
    <property type="match status" value="1"/>
</dbReference>
<dbReference type="Gene3D" id="3.30.1330.10">
    <property type="entry name" value="PurM-like, N-terminal domain"/>
    <property type="match status" value="1"/>
</dbReference>
<dbReference type="HAMAP" id="MF_00741">
    <property type="entry name" value="AIRS"/>
    <property type="match status" value="1"/>
</dbReference>
<dbReference type="InterPro" id="IPR010918">
    <property type="entry name" value="PurM-like_C_dom"/>
</dbReference>
<dbReference type="InterPro" id="IPR036676">
    <property type="entry name" value="PurM-like_C_sf"/>
</dbReference>
<dbReference type="InterPro" id="IPR016188">
    <property type="entry name" value="PurM-like_N"/>
</dbReference>
<dbReference type="InterPro" id="IPR036921">
    <property type="entry name" value="PurM-like_N_sf"/>
</dbReference>
<dbReference type="InterPro" id="IPR004733">
    <property type="entry name" value="PurM_cligase"/>
</dbReference>
<dbReference type="NCBIfam" id="TIGR00878">
    <property type="entry name" value="purM"/>
    <property type="match status" value="1"/>
</dbReference>
<dbReference type="PANTHER" id="PTHR10520:SF12">
    <property type="entry name" value="TRIFUNCTIONAL PURINE BIOSYNTHETIC PROTEIN ADENOSINE-3"/>
    <property type="match status" value="1"/>
</dbReference>
<dbReference type="PANTHER" id="PTHR10520">
    <property type="entry name" value="TRIFUNCTIONAL PURINE BIOSYNTHETIC PROTEIN ADENOSINE-3-RELATED"/>
    <property type="match status" value="1"/>
</dbReference>
<dbReference type="Pfam" id="PF00586">
    <property type="entry name" value="AIRS"/>
    <property type="match status" value="1"/>
</dbReference>
<dbReference type="Pfam" id="PF02769">
    <property type="entry name" value="AIRS_C"/>
    <property type="match status" value="1"/>
</dbReference>
<dbReference type="SUPFAM" id="SSF56042">
    <property type="entry name" value="PurM C-terminal domain-like"/>
    <property type="match status" value="1"/>
</dbReference>
<dbReference type="SUPFAM" id="SSF55326">
    <property type="entry name" value="PurM N-terminal domain-like"/>
    <property type="match status" value="1"/>
</dbReference>
<evidence type="ECO:0000255" key="1">
    <source>
        <dbReference type="HAMAP-Rule" id="MF_00741"/>
    </source>
</evidence>
<proteinExistence type="inferred from homology"/>
<gene>
    <name evidence="1" type="primary">purM</name>
    <name type="ordered locus">YE1127</name>
</gene>
<sequence>MTNKTSLSYKDAGVDIDAGNDLVDRIKGVVKQTRRPEVMGGLGGFGALCALPQKYREPILVSGTDGVGTKLRLAMDLKRHDTIGIDLVAMCVNDLVVQGAEPLFFLDYFATGKLDVDTAASVITGIAEGCKQSGCALVGGETAEMPGMYHGEDYDVAGFCVGVVEKSEIIDGSKVAPGDALVALGASGPHSNGYSLVRKILEVSNTDPEQTQLDGKSLADHLLEPTKIYVKSILSLIEQLDIHAIAHLTGGGFWENIPRVLPQGTQAVIDEASWQWPAVFSWLQETGNVSRHEMYRTFNCGVGMVVALPAELADKAVELLTASGEKAWKIGVIAAAAEGAEQVIINP</sequence>
<reference key="1">
    <citation type="journal article" date="2006" name="PLoS Genet.">
        <title>The complete genome sequence and comparative genome analysis of the high pathogenicity Yersinia enterocolitica strain 8081.</title>
        <authorList>
            <person name="Thomson N.R."/>
            <person name="Howard S."/>
            <person name="Wren B.W."/>
            <person name="Holden M.T.G."/>
            <person name="Crossman L."/>
            <person name="Challis G.L."/>
            <person name="Churcher C."/>
            <person name="Mungall K."/>
            <person name="Brooks K."/>
            <person name="Chillingworth T."/>
            <person name="Feltwell T."/>
            <person name="Abdellah Z."/>
            <person name="Hauser H."/>
            <person name="Jagels K."/>
            <person name="Maddison M."/>
            <person name="Moule S."/>
            <person name="Sanders M."/>
            <person name="Whitehead S."/>
            <person name="Quail M.A."/>
            <person name="Dougan G."/>
            <person name="Parkhill J."/>
            <person name="Prentice M.B."/>
        </authorList>
    </citation>
    <scope>NUCLEOTIDE SEQUENCE [LARGE SCALE GENOMIC DNA]</scope>
    <source>
        <strain>NCTC 13174 / 8081</strain>
    </source>
</reference>
<comment type="catalytic activity">
    <reaction evidence="1">
        <text>2-formamido-N(1)-(5-O-phospho-beta-D-ribosyl)acetamidine + ATP = 5-amino-1-(5-phospho-beta-D-ribosyl)imidazole + ADP + phosphate + H(+)</text>
        <dbReference type="Rhea" id="RHEA:23032"/>
        <dbReference type="ChEBI" id="CHEBI:15378"/>
        <dbReference type="ChEBI" id="CHEBI:30616"/>
        <dbReference type="ChEBI" id="CHEBI:43474"/>
        <dbReference type="ChEBI" id="CHEBI:137981"/>
        <dbReference type="ChEBI" id="CHEBI:147287"/>
        <dbReference type="ChEBI" id="CHEBI:456216"/>
        <dbReference type="EC" id="6.3.3.1"/>
    </reaction>
</comment>
<comment type="pathway">
    <text evidence="1">Purine metabolism; IMP biosynthesis via de novo pathway; 5-amino-1-(5-phospho-D-ribosyl)imidazole from N(2)-formyl-N(1)-(5-phospho-D-ribosyl)glycinamide: step 2/2.</text>
</comment>
<comment type="subcellular location">
    <subcellularLocation>
        <location evidence="1">Cytoplasm</location>
    </subcellularLocation>
</comment>
<comment type="similarity">
    <text evidence="1">Belongs to the AIR synthase family.</text>
</comment>
<organism>
    <name type="scientific">Yersinia enterocolitica serotype O:8 / biotype 1B (strain NCTC 13174 / 8081)</name>
    <dbReference type="NCBI Taxonomy" id="393305"/>
    <lineage>
        <taxon>Bacteria</taxon>
        <taxon>Pseudomonadati</taxon>
        <taxon>Pseudomonadota</taxon>
        <taxon>Gammaproteobacteria</taxon>
        <taxon>Enterobacterales</taxon>
        <taxon>Yersiniaceae</taxon>
        <taxon>Yersinia</taxon>
    </lineage>
</organism>
<keyword id="KW-0067">ATP-binding</keyword>
<keyword id="KW-0963">Cytoplasm</keyword>
<keyword id="KW-0436">Ligase</keyword>
<keyword id="KW-0547">Nucleotide-binding</keyword>
<keyword id="KW-0658">Purine biosynthesis</keyword>
<protein>
    <recommendedName>
        <fullName evidence="1">Phosphoribosylformylglycinamidine cyclo-ligase</fullName>
        <ecNumber evidence="1">6.3.3.1</ecNumber>
    </recommendedName>
    <alternativeName>
        <fullName evidence="1">AIR synthase</fullName>
    </alternativeName>
    <alternativeName>
        <fullName evidence="1">AIRS</fullName>
    </alternativeName>
    <alternativeName>
        <fullName evidence="1">Phosphoribosyl-aminoimidazole synthetase</fullName>
    </alternativeName>
</protein>
<name>PUR5_YERE8</name>
<accession>A1JKZ7</accession>